<feature type="chain" id="PRO_1000005100" description="Small ribosomal subunit protein bS21">
    <location>
        <begin position="1"/>
        <end position="70"/>
    </location>
</feature>
<accession>A2S6T3</accession>
<evidence type="ECO:0000255" key="1">
    <source>
        <dbReference type="HAMAP-Rule" id="MF_00358"/>
    </source>
</evidence>
<evidence type="ECO:0000305" key="2"/>
<dbReference type="EMBL" id="CP000546">
    <property type="protein sequence ID" value="ABN03181.1"/>
    <property type="molecule type" value="Genomic_DNA"/>
</dbReference>
<dbReference type="RefSeq" id="WP_004198205.1">
    <property type="nucleotide sequence ID" value="NC_008836.1"/>
</dbReference>
<dbReference type="SMR" id="A2S6T3"/>
<dbReference type="GeneID" id="93061939"/>
<dbReference type="KEGG" id="bml:BMA10229_A1672"/>
<dbReference type="HOGENOM" id="CLU_159258_1_1_4"/>
<dbReference type="Proteomes" id="UP000002283">
    <property type="component" value="Chromosome I"/>
</dbReference>
<dbReference type="GO" id="GO:1990904">
    <property type="term" value="C:ribonucleoprotein complex"/>
    <property type="evidence" value="ECO:0007669"/>
    <property type="project" value="UniProtKB-KW"/>
</dbReference>
<dbReference type="GO" id="GO:0005840">
    <property type="term" value="C:ribosome"/>
    <property type="evidence" value="ECO:0007669"/>
    <property type="project" value="UniProtKB-KW"/>
</dbReference>
<dbReference type="GO" id="GO:0003735">
    <property type="term" value="F:structural constituent of ribosome"/>
    <property type="evidence" value="ECO:0007669"/>
    <property type="project" value="InterPro"/>
</dbReference>
<dbReference type="GO" id="GO:0006412">
    <property type="term" value="P:translation"/>
    <property type="evidence" value="ECO:0007669"/>
    <property type="project" value="UniProtKB-UniRule"/>
</dbReference>
<dbReference type="Gene3D" id="1.20.5.1150">
    <property type="entry name" value="Ribosomal protein S8"/>
    <property type="match status" value="1"/>
</dbReference>
<dbReference type="HAMAP" id="MF_00358">
    <property type="entry name" value="Ribosomal_bS21"/>
    <property type="match status" value="1"/>
</dbReference>
<dbReference type="InterPro" id="IPR001911">
    <property type="entry name" value="Ribosomal_bS21"/>
</dbReference>
<dbReference type="InterPro" id="IPR038380">
    <property type="entry name" value="Ribosomal_bS21_sf"/>
</dbReference>
<dbReference type="NCBIfam" id="TIGR00030">
    <property type="entry name" value="S21p"/>
    <property type="match status" value="1"/>
</dbReference>
<dbReference type="PANTHER" id="PTHR21109">
    <property type="entry name" value="MITOCHONDRIAL 28S RIBOSOMAL PROTEIN S21"/>
    <property type="match status" value="1"/>
</dbReference>
<dbReference type="PANTHER" id="PTHR21109:SF22">
    <property type="entry name" value="SMALL RIBOSOMAL SUBUNIT PROTEIN BS21"/>
    <property type="match status" value="1"/>
</dbReference>
<dbReference type="Pfam" id="PF01165">
    <property type="entry name" value="Ribosomal_S21"/>
    <property type="match status" value="1"/>
</dbReference>
<dbReference type="PRINTS" id="PR00976">
    <property type="entry name" value="RIBOSOMALS21"/>
</dbReference>
<organism>
    <name type="scientific">Burkholderia mallei (strain NCTC 10229)</name>
    <dbReference type="NCBI Taxonomy" id="412022"/>
    <lineage>
        <taxon>Bacteria</taxon>
        <taxon>Pseudomonadati</taxon>
        <taxon>Pseudomonadota</taxon>
        <taxon>Betaproteobacteria</taxon>
        <taxon>Burkholderiales</taxon>
        <taxon>Burkholderiaceae</taxon>
        <taxon>Burkholderia</taxon>
        <taxon>pseudomallei group</taxon>
    </lineage>
</organism>
<gene>
    <name evidence="1" type="primary">rpsU</name>
    <name type="ordered locus">BMA10229_A1672</name>
</gene>
<name>RS21_BURM9</name>
<sequence>MTTILLKENEPFEVAIRRFRRAIEKNGLIAELRERQAYEKPTAVRKRKKAAAVKRLHKRLRSQMLPKKLH</sequence>
<protein>
    <recommendedName>
        <fullName evidence="1">Small ribosomal subunit protein bS21</fullName>
    </recommendedName>
    <alternativeName>
        <fullName evidence="2">30S ribosomal protein S21</fullName>
    </alternativeName>
</protein>
<reference key="1">
    <citation type="journal article" date="2010" name="Genome Biol. Evol.">
        <title>Continuing evolution of Burkholderia mallei through genome reduction and large-scale rearrangements.</title>
        <authorList>
            <person name="Losada L."/>
            <person name="Ronning C.M."/>
            <person name="DeShazer D."/>
            <person name="Woods D."/>
            <person name="Fedorova N."/>
            <person name="Kim H.S."/>
            <person name="Shabalina S.A."/>
            <person name="Pearson T.R."/>
            <person name="Brinkac L."/>
            <person name="Tan P."/>
            <person name="Nandi T."/>
            <person name="Crabtree J."/>
            <person name="Badger J."/>
            <person name="Beckstrom-Sternberg S."/>
            <person name="Saqib M."/>
            <person name="Schutzer S.E."/>
            <person name="Keim P."/>
            <person name="Nierman W.C."/>
        </authorList>
    </citation>
    <scope>NUCLEOTIDE SEQUENCE [LARGE SCALE GENOMIC DNA]</scope>
    <source>
        <strain>NCTC 10229</strain>
    </source>
</reference>
<comment type="similarity">
    <text evidence="1">Belongs to the bacterial ribosomal protein bS21 family.</text>
</comment>
<proteinExistence type="inferred from homology"/>
<keyword id="KW-0687">Ribonucleoprotein</keyword>
<keyword id="KW-0689">Ribosomal protein</keyword>